<dbReference type="EC" id="3.2.1.113" evidence="3"/>
<dbReference type="EMBL" id="AL732557">
    <property type="status" value="NOT_ANNOTATED_CDS"/>
    <property type="molecule type" value="Genomic_DNA"/>
</dbReference>
<dbReference type="EMBL" id="CH466542">
    <property type="protein sequence ID" value="EDL08233.1"/>
    <property type="molecule type" value="Genomic_DNA"/>
</dbReference>
<dbReference type="EMBL" id="BC138550">
    <property type="protein sequence ID" value="AAI38551.1"/>
    <property type="molecule type" value="mRNA"/>
</dbReference>
<dbReference type="EMBL" id="BC138551">
    <property type="protein sequence ID" value="AAI38552.1"/>
    <property type="molecule type" value="mRNA"/>
</dbReference>
<dbReference type="CCDS" id="CCDS15765.1"/>
<dbReference type="RefSeq" id="NP_001025154.1">
    <property type="nucleotide sequence ID" value="NM_001029983.2"/>
</dbReference>
<dbReference type="SMR" id="A2AJ15"/>
<dbReference type="BioGRID" id="230645">
    <property type="interactions" value="3"/>
</dbReference>
<dbReference type="FunCoup" id="A2AJ15">
    <property type="interactions" value="3953"/>
</dbReference>
<dbReference type="STRING" id="10090.ENSMUSP00000036996"/>
<dbReference type="iPTMnet" id="A2AJ15"/>
<dbReference type="PhosphoSitePlus" id="A2AJ15"/>
<dbReference type="SwissPalm" id="A2AJ15"/>
<dbReference type="PaxDb" id="10090-ENSMUSP00000036996"/>
<dbReference type="PeptideAtlas" id="A2AJ15"/>
<dbReference type="ProteomicsDB" id="292073"/>
<dbReference type="Pumba" id="A2AJ15"/>
<dbReference type="Antibodypedia" id="32359">
    <property type="antibodies" value="137 antibodies from 24 providers"/>
</dbReference>
<dbReference type="DNASU" id="227619"/>
<dbReference type="Ensembl" id="ENSMUST00000042390.5">
    <property type="protein sequence ID" value="ENSMUSP00000036996.5"/>
    <property type="gene ID" value="ENSMUSG00000036646.14"/>
</dbReference>
<dbReference type="GeneID" id="227619"/>
<dbReference type="KEGG" id="mmu:227619"/>
<dbReference type="UCSC" id="uc008irp.2">
    <property type="organism name" value="mouse"/>
</dbReference>
<dbReference type="AGR" id="MGI:2684954"/>
<dbReference type="CTD" id="11253"/>
<dbReference type="MGI" id="MGI:2684954">
    <property type="gene designation" value="Man1b1"/>
</dbReference>
<dbReference type="VEuPathDB" id="HostDB:ENSMUSG00000036646"/>
<dbReference type="eggNOG" id="KOG2431">
    <property type="taxonomic scope" value="Eukaryota"/>
</dbReference>
<dbReference type="GeneTree" id="ENSGT00940000155422"/>
<dbReference type="HOGENOM" id="CLU_003818_3_3_1"/>
<dbReference type="InParanoid" id="A2AJ15"/>
<dbReference type="OMA" id="WDAYTKY"/>
<dbReference type="OrthoDB" id="8118055at2759"/>
<dbReference type="PhylomeDB" id="A2AJ15"/>
<dbReference type="TreeFam" id="TF354274"/>
<dbReference type="UniPathway" id="UPA00378"/>
<dbReference type="BioGRID-ORCS" id="227619">
    <property type="hits" value="2 hits in 77 CRISPR screens"/>
</dbReference>
<dbReference type="ChiTaRS" id="Man1b1">
    <property type="organism name" value="mouse"/>
</dbReference>
<dbReference type="PRO" id="PR:A2AJ15"/>
<dbReference type="Proteomes" id="UP000000589">
    <property type="component" value="Chromosome 2"/>
</dbReference>
<dbReference type="RNAct" id="A2AJ15">
    <property type="molecule type" value="protein"/>
</dbReference>
<dbReference type="Bgee" id="ENSMUSG00000036646">
    <property type="expression patterns" value="Expressed in spermatocyte and 218 other cell types or tissues"/>
</dbReference>
<dbReference type="ExpressionAtlas" id="A2AJ15">
    <property type="expression patterns" value="baseline and differential"/>
</dbReference>
<dbReference type="GO" id="GO:0031410">
    <property type="term" value="C:cytoplasmic vesicle"/>
    <property type="evidence" value="ECO:0007669"/>
    <property type="project" value="Ensembl"/>
</dbReference>
<dbReference type="GO" id="GO:0005789">
    <property type="term" value="C:endoplasmic reticulum membrane"/>
    <property type="evidence" value="ECO:0007669"/>
    <property type="project" value="UniProtKB-SubCell"/>
</dbReference>
<dbReference type="GO" id="GO:0044322">
    <property type="term" value="C:endoplasmic reticulum quality control compartment"/>
    <property type="evidence" value="ECO:0007669"/>
    <property type="project" value="Ensembl"/>
</dbReference>
<dbReference type="GO" id="GO:0005509">
    <property type="term" value="F:calcium ion binding"/>
    <property type="evidence" value="ECO:0007669"/>
    <property type="project" value="InterPro"/>
</dbReference>
<dbReference type="GO" id="GO:0004571">
    <property type="term" value="F:mannosyl-oligosaccharide 1,2-alpha-mannosidase activity"/>
    <property type="evidence" value="ECO:0000315"/>
    <property type="project" value="MGI"/>
</dbReference>
<dbReference type="GO" id="GO:0005975">
    <property type="term" value="P:carbohydrate metabolic process"/>
    <property type="evidence" value="ECO:0007669"/>
    <property type="project" value="InterPro"/>
</dbReference>
<dbReference type="GO" id="GO:0036503">
    <property type="term" value="P:ERAD pathway"/>
    <property type="evidence" value="ECO:0000315"/>
    <property type="project" value="MGI"/>
</dbReference>
<dbReference type="GO" id="GO:0006058">
    <property type="term" value="P:mannoprotein catabolic process"/>
    <property type="evidence" value="ECO:0007669"/>
    <property type="project" value="Ensembl"/>
</dbReference>
<dbReference type="GO" id="GO:0006486">
    <property type="term" value="P:protein glycosylation"/>
    <property type="evidence" value="ECO:0007669"/>
    <property type="project" value="UniProtKB-UniPathway"/>
</dbReference>
<dbReference type="FunFam" id="1.50.10.10:FF:000010">
    <property type="entry name" value="alpha-1,2-Mannosidase"/>
    <property type="match status" value="1"/>
</dbReference>
<dbReference type="Gene3D" id="1.50.10.10">
    <property type="match status" value="1"/>
</dbReference>
<dbReference type="InterPro" id="IPR012341">
    <property type="entry name" value="6hp_glycosidase-like_sf"/>
</dbReference>
<dbReference type="InterPro" id="IPR001382">
    <property type="entry name" value="Glyco_hydro_47"/>
</dbReference>
<dbReference type="InterPro" id="IPR050749">
    <property type="entry name" value="Glycosyl_Hydrolase_47"/>
</dbReference>
<dbReference type="InterPro" id="IPR036026">
    <property type="entry name" value="Seven-hairpin_glycosidases"/>
</dbReference>
<dbReference type="PANTHER" id="PTHR11742:SF55">
    <property type="entry name" value="ENDOPLASMIC RETICULUM MANNOSYL-OLIGOSACCHARIDE 1,2-ALPHA-MANNOSIDASE"/>
    <property type="match status" value="1"/>
</dbReference>
<dbReference type="PANTHER" id="PTHR11742">
    <property type="entry name" value="MANNOSYL-OLIGOSACCHARIDE ALPHA-1,2-MANNOSIDASE-RELATED"/>
    <property type="match status" value="1"/>
</dbReference>
<dbReference type="Pfam" id="PF01532">
    <property type="entry name" value="Glyco_hydro_47"/>
    <property type="match status" value="1"/>
</dbReference>
<dbReference type="PRINTS" id="PR00747">
    <property type="entry name" value="GLYHDRLASE47"/>
</dbReference>
<dbReference type="SUPFAM" id="SSF48225">
    <property type="entry name" value="Seven-hairpin glycosidases"/>
    <property type="match status" value="1"/>
</dbReference>
<comment type="function">
    <text evidence="1">Involved in glycoprotein quality control targeting of misfolded glycoproteins for degradation. It primarily trims a single alpha-1,2-linked mannose residue from Man(9)GlcNAc(2) to produce Man(8)GlcNAc(2), but at high enzyme concentrations, as found in the ER quality control compartment (ERQC), it further trims the carbohydrates to Man(5-6)GlcNAc(2) (By similarity).</text>
</comment>
<comment type="catalytic activity">
    <reaction evidence="3">
        <text>N(4)-(alpha-D-Man-(1-&gt;2)-alpha-D-Man-(1-&gt;2)-alpha-D-Man-(1-&gt;3)-[alpha-D-Man-(1-&gt;2)-alpha-D-Man-(1-&gt;3)-[alpha-D-Man-(1-&gt;2)-alpha-D-Man-(1-&gt;6)]-alpha-D-Man-(1-&gt;6)]-beta-D-Man-(1-&gt;4)-beta-D-GlcNAc-(1-&gt;4)-beta-D-GlcNAc)-L-asparaginyl-[protein] (N-glucan mannose isomer 9A1,2,3B1,2,3) + 4 H2O = N(4)-(alpha-D-Man-(1-&gt;3)-[alpha-D-Man-(1-&gt;3)-[alpha-D-Man-(1-&gt;6)]-alpha-D-Man-(1-&gt;6)]-beta-D-Man-(1-&gt;4)-beta-D-GlcNAc-(1-&gt;4)-beta-D-GlcNAc)-L-asparaginyl-[protein] (N-glucan mannose isomer 5A1,2) + 4 beta-D-mannose</text>
        <dbReference type="Rhea" id="RHEA:56008"/>
        <dbReference type="Rhea" id="RHEA-COMP:14356"/>
        <dbReference type="Rhea" id="RHEA-COMP:14367"/>
        <dbReference type="ChEBI" id="CHEBI:15377"/>
        <dbReference type="ChEBI" id="CHEBI:28563"/>
        <dbReference type="ChEBI" id="CHEBI:59087"/>
        <dbReference type="ChEBI" id="CHEBI:139493"/>
        <dbReference type="EC" id="3.2.1.113"/>
    </reaction>
</comment>
<comment type="catalytic activity">
    <reaction evidence="3">
        <text>N(4)-(alpha-D-Man-(1-&gt;2)-alpha-D-Man-(1-&gt;2)-alpha-D-Man-(1-&gt;3)-[alpha-D-Man-(1-&gt;3)-[alpha-D-Man-(1-&gt;2)-alpha-D-Man-(1-&gt;6)]-alpha-D-Man-(1-&gt;6)]-beta-D-Man-(1-&gt;4)-beta-D-GlcNAc-(1-&gt;4)-beta-D-GlcNAc)-L-asparaginyl-[protein] (N-glucan mannose isomer 8A1,2,3B1,3) + 3 H2O = N(4)-(alpha-D-Man-(1-&gt;3)-[alpha-D-Man-(1-&gt;3)-[alpha-D-Man-(1-&gt;6)]-alpha-D-Man-(1-&gt;6)]-beta-D-Man-(1-&gt;4)-beta-D-GlcNAc-(1-&gt;4)-beta-D-GlcNAc)-L-asparaginyl-[protein] (N-glucan mannose isomer 5A1,2) + 3 beta-D-mannose</text>
        <dbReference type="Rhea" id="RHEA:56028"/>
        <dbReference type="Rhea" id="RHEA-COMP:14358"/>
        <dbReference type="Rhea" id="RHEA-COMP:14367"/>
        <dbReference type="ChEBI" id="CHEBI:15377"/>
        <dbReference type="ChEBI" id="CHEBI:28563"/>
        <dbReference type="ChEBI" id="CHEBI:59087"/>
        <dbReference type="ChEBI" id="CHEBI:60628"/>
        <dbReference type="EC" id="3.2.1.113"/>
    </reaction>
</comment>
<comment type="cofactor">
    <cofactor evidence="4">
        <name>Ca(2+)</name>
        <dbReference type="ChEBI" id="CHEBI:29108"/>
    </cofactor>
</comment>
<comment type="pathway">
    <text evidence="3">Protein modification; protein glycosylation.</text>
</comment>
<comment type="subcellular location">
    <subcellularLocation>
        <location>Endoplasmic reticulum membrane</location>
        <topology>Single-pass type II membrane protein</topology>
    </subcellularLocation>
</comment>
<comment type="similarity">
    <text evidence="7">Belongs to the glycosyl hydrolase 47 family.</text>
</comment>
<gene>
    <name type="primary">Man1b1</name>
</gene>
<keyword id="KW-0106">Calcium</keyword>
<keyword id="KW-1015">Disulfide bond</keyword>
<keyword id="KW-0256">Endoplasmic reticulum</keyword>
<keyword id="KW-0326">Glycosidase</keyword>
<keyword id="KW-0378">Hydrolase</keyword>
<keyword id="KW-0472">Membrane</keyword>
<keyword id="KW-0479">Metal-binding</keyword>
<keyword id="KW-0597">Phosphoprotein</keyword>
<keyword id="KW-1185">Reference proteome</keyword>
<keyword id="KW-0735">Signal-anchor</keyword>
<keyword id="KW-0812">Transmembrane</keyword>
<keyword id="KW-1133">Transmembrane helix</keyword>
<name>MA1B1_MOUSE</name>
<feature type="chain" id="PRO_0000396622" description="Endoplasmic reticulum mannosyl-oligosaccharide 1,2-alpha-mannosidase">
    <location>
        <begin position="1"/>
        <end position="658"/>
    </location>
</feature>
<feature type="topological domain" description="Cytoplasmic" evidence="5">
    <location>
        <begin position="1"/>
        <end position="50"/>
    </location>
</feature>
<feature type="transmembrane region" description="Helical; Signal-anchor for type II membrane protein" evidence="5">
    <location>
        <begin position="51"/>
        <end position="71"/>
    </location>
</feature>
<feature type="topological domain" description="Lumenal" evidence="5">
    <location>
        <begin position="72"/>
        <end position="658"/>
    </location>
</feature>
<feature type="region of interest" description="Disordered" evidence="6">
    <location>
        <begin position="123"/>
        <end position="142"/>
    </location>
</feature>
<feature type="active site" description="Proton donor" evidence="1">
    <location>
        <position position="289"/>
    </location>
</feature>
<feature type="active site" evidence="1">
    <location>
        <position position="422"/>
    </location>
</feature>
<feature type="active site" description="Proton donor" evidence="2">
    <location>
        <position position="529"/>
    </location>
</feature>
<feature type="active site" evidence="1">
    <location>
        <position position="558"/>
    </location>
</feature>
<feature type="binding site" evidence="3">
    <location>
        <position position="647"/>
    </location>
    <ligand>
        <name>Ca(2+)</name>
        <dbReference type="ChEBI" id="CHEBI:29108"/>
    </ligand>
</feature>
<feature type="modified residue" description="Phosphoserine" evidence="8">
    <location>
        <position position="102"/>
    </location>
</feature>
<feature type="disulfide bond" evidence="3">
    <location>
        <begin position="486"/>
        <end position="515"/>
    </location>
</feature>
<proteinExistence type="evidence at protein level"/>
<protein>
    <recommendedName>
        <fullName>Endoplasmic reticulum mannosyl-oligosaccharide 1,2-alpha-mannosidase</fullName>
        <ecNumber evidence="3">3.2.1.113</ecNumber>
    </recommendedName>
    <alternativeName>
        <fullName>ER alpha-1,2-mannosidase</fullName>
    </alternativeName>
    <alternativeName>
        <fullName>ER mannosidase 1</fullName>
        <shortName>ERMan1</shortName>
    </alternativeName>
    <alternativeName>
        <fullName>Man9GlcNAc2-specific-processing alpha-mannosidase</fullName>
    </alternativeName>
    <alternativeName>
        <fullName>Mannosidase alpha class 1B member 1</fullName>
    </alternativeName>
</protein>
<evidence type="ECO:0000250" key="1"/>
<evidence type="ECO:0000250" key="2">
    <source>
        <dbReference type="UniProtKB" id="P31723"/>
    </source>
</evidence>
<evidence type="ECO:0000250" key="3">
    <source>
        <dbReference type="UniProtKB" id="P32906"/>
    </source>
</evidence>
<evidence type="ECO:0000250" key="4">
    <source>
        <dbReference type="UniProtKB" id="P45700"/>
    </source>
</evidence>
<evidence type="ECO:0000255" key="5"/>
<evidence type="ECO:0000256" key="6">
    <source>
        <dbReference type="SAM" id="MobiDB-lite"/>
    </source>
</evidence>
<evidence type="ECO:0000305" key="7"/>
<evidence type="ECO:0007744" key="8">
    <source>
    </source>
</evidence>
<reference key="1">
    <citation type="journal article" date="2009" name="PLoS Biol.">
        <title>Lineage-specific biology revealed by a finished genome assembly of the mouse.</title>
        <authorList>
            <person name="Church D.M."/>
            <person name="Goodstadt L."/>
            <person name="Hillier L.W."/>
            <person name="Zody M.C."/>
            <person name="Goldstein S."/>
            <person name="She X."/>
            <person name="Bult C.J."/>
            <person name="Agarwala R."/>
            <person name="Cherry J.L."/>
            <person name="DiCuccio M."/>
            <person name="Hlavina W."/>
            <person name="Kapustin Y."/>
            <person name="Meric P."/>
            <person name="Maglott D."/>
            <person name="Birtle Z."/>
            <person name="Marques A.C."/>
            <person name="Graves T."/>
            <person name="Zhou S."/>
            <person name="Teague B."/>
            <person name="Potamousis K."/>
            <person name="Churas C."/>
            <person name="Place M."/>
            <person name="Herschleb J."/>
            <person name="Runnheim R."/>
            <person name="Forrest D."/>
            <person name="Amos-Landgraf J."/>
            <person name="Schwartz D.C."/>
            <person name="Cheng Z."/>
            <person name="Lindblad-Toh K."/>
            <person name="Eichler E.E."/>
            <person name="Ponting C.P."/>
        </authorList>
    </citation>
    <scope>NUCLEOTIDE SEQUENCE [LARGE SCALE GENOMIC DNA]</scope>
    <source>
        <strain>C57BL/6J</strain>
    </source>
</reference>
<reference key="2">
    <citation type="submission" date="2005-07" db="EMBL/GenBank/DDBJ databases">
        <authorList>
            <person name="Mural R.J."/>
            <person name="Adams M.D."/>
            <person name="Myers E.W."/>
            <person name="Smith H.O."/>
            <person name="Venter J.C."/>
        </authorList>
    </citation>
    <scope>NUCLEOTIDE SEQUENCE [LARGE SCALE GENOMIC DNA]</scope>
</reference>
<reference key="3">
    <citation type="journal article" date="2004" name="Genome Res.">
        <title>The status, quality, and expansion of the NIH full-length cDNA project: the Mammalian Gene Collection (MGC).</title>
        <authorList>
            <consortium name="The MGC Project Team"/>
        </authorList>
    </citation>
    <scope>NUCLEOTIDE SEQUENCE [LARGE SCALE MRNA]</scope>
    <source>
        <tissue>Brain</tissue>
    </source>
</reference>
<reference key="4">
    <citation type="journal article" date="2010" name="Cell">
        <title>A tissue-specific atlas of mouse protein phosphorylation and expression.</title>
        <authorList>
            <person name="Huttlin E.L."/>
            <person name="Jedrychowski M.P."/>
            <person name="Elias J.E."/>
            <person name="Goswami T."/>
            <person name="Rad R."/>
            <person name="Beausoleil S.A."/>
            <person name="Villen J."/>
            <person name="Haas W."/>
            <person name="Sowa M.E."/>
            <person name="Gygi S.P."/>
        </authorList>
    </citation>
    <scope>PHOSPHORYLATION [LARGE SCALE ANALYSIS] AT SER-102</scope>
    <scope>IDENTIFICATION BY MASS SPECTROMETRY [LARGE SCALE ANALYSIS]</scope>
    <source>
        <tissue>Kidney</tissue>
        <tissue>Lung</tissue>
        <tissue>Spleen</tissue>
        <tissue>Testis</tissue>
    </source>
</reference>
<organism>
    <name type="scientific">Mus musculus</name>
    <name type="common">Mouse</name>
    <dbReference type="NCBI Taxonomy" id="10090"/>
    <lineage>
        <taxon>Eukaryota</taxon>
        <taxon>Metazoa</taxon>
        <taxon>Chordata</taxon>
        <taxon>Craniata</taxon>
        <taxon>Vertebrata</taxon>
        <taxon>Euteleostomi</taxon>
        <taxon>Mammalia</taxon>
        <taxon>Eutheria</taxon>
        <taxon>Euarchontoglires</taxon>
        <taxon>Glires</taxon>
        <taxon>Rodentia</taxon>
        <taxon>Myomorpha</taxon>
        <taxon>Muroidea</taxon>
        <taxon>Muridae</taxon>
        <taxon>Murinae</taxon>
        <taxon>Mus</taxon>
        <taxon>Mus</taxon>
    </lineage>
</organism>
<accession>A2AJ15</accession>
<sequence>MYPPPAPPPAPHRDFISVTLSLGESYDNSKSRRRRSCWRKWKQLSRLQRNVILFVLGFLILCGFLYSLHTADQWKALSGRPAEVEKMKQEVLPVLPAPQKESAEQEGFADILSQKRQRHFRRGPPHLQIRPPNTVSKDGMQDDAKEREAALGKAQQEENTQRTVISWRGAVIEPEQATELPYKRAEASIKPLVLASKIWKEPAPPNERQKGVIEAFLHAWKGYQKFAWGHDELKPVSKTFSEWFGLGLTLIDALDTMWILGLKQEFKQARKWVSENLDFQKNVDVNLFESTIRILGGLLSTYHLSGDSLFLTKAEDFGKRLMPAFTTPSKIPYSDVNIGTGFAHSPQWTSDSTVAEVTSIQLEFRELSRLTGIKKFQEAVEEVTKHIHSLSGKKDGLVPMFINTNSGLFTHPGVFTLGARADSYYEYLLKQWIQGGKKETQLLEDYVKAIEGIKAHLLRQSQPRKLTFVGELAHGRFSAKMDHLVCFLPGTLALGVHHGLPADHMDLARALMETCYQMNQQMETGLSPEIAHFNMYPRADHKDVEVKPADRHNLLRPETVESLFYLYRVTRDRKYQDWGWEILQSFNKYTRVPSGGYSSINNVQNSHKPEPRDKMESFFVGETLKYLYLLFSDDLELLSLDSCVFNTEAHPLPIWAPA</sequence>